<reference key="1">
    <citation type="journal article" date="2008" name="J. Bacteriol.">
        <title>Genome sequence of Lactobacillus helveticus: an organism distinguished by selective gene loss and IS element expansion.</title>
        <authorList>
            <person name="Callanan M."/>
            <person name="Kaleta P."/>
            <person name="O'Callaghan J."/>
            <person name="O'Sullivan O."/>
            <person name="Jordan K."/>
            <person name="McAuliffe O."/>
            <person name="Sangrador-Vegas A."/>
            <person name="Slattery L."/>
            <person name="Fitzgerald G.F."/>
            <person name="Beresford T."/>
            <person name="Ross R.P."/>
        </authorList>
    </citation>
    <scope>NUCLEOTIDE SEQUENCE [LARGE SCALE GENOMIC DNA]</scope>
    <source>
        <strain>DPC 4571</strain>
    </source>
</reference>
<gene>
    <name evidence="1" type="primary">clpP</name>
    <name type="ordered locus">lhv_0735</name>
</gene>
<keyword id="KW-0963">Cytoplasm</keyword>
<keyword id="KW-0378">Hydrolase</keyword>
<keyword id="KW-0645">Protease</keyword>
<keyword id="KW-0720">Serine protease</keyword>
<comment type="function">
    <text evidence="1">Cleaves peptides in various proteins in a process that requires ATP hydrolysis. Has a chymotrypsin-like activity. Plays a major role in the degradation of misfolded proteins.</text>
</comment>
<comment type="catalytic activity">
    <reaction evidence="1">
        <text>Hydrolysis of proteins to small peptides in the presence of ATP and magnesium. alpha-casein is the usual test substrate. In the absence of ATP, only oligopeptides shorter than five residues are hydrolyzed (such as succinyl-Leu-Tyr-|-NHMec, and Leu-Tyr-Leu-|-Tyr-Trp, in which cleavage of the -Tyr-|-Leu- and -Tyr-|-Trp bonds also occurs).</text>
        <dbReference type="EC" id="3.4.21.92"/>
    </reaction>
</comment>
<comment type="subunit">
    <text evidence="1">Fourteen ClpP subunits assemble into 2 heptameric rings which stack back to back to give a disk-like structure with a central cavity, resembling the structure of eukaryotic proteasomes.</text>
</comment>
<comment type="subcellular location">
    <subcellularLocation>
        <location evidence="1">Cytoplasm</location>
    </subcellularLocation>
</comment>
<comment type="similarity">
    <text evidence="1">Belongs to the peptidase S14 family.</text>
</comment>
<accession>A8YUD9</accession>
<organism>
    <name type="scientific">Lactobacillus helveticus (strain DPC 4571)</name>
    <dbReference type="NCBI Taxonomy" id="405566"/>
    <lineage>
        <taxon>Bacteria</taxon>
        <taxon>Bacillati</taxon>
        <taxon>Bacillota</taxon>
        <taxon>Bacilli</taxon>
        <taxon>Lactobacillales</taxon>
        <taxon>Lactobacillaceae</taxon>
        <taxon>Lactobacillus</taxon>
    </lineage>
</organism>
<name>CLPP_LACH4</name>
<sequence>MLVPTVIEQTARGERAYDIYSRLLKDRIIMLSGEINDQMANSIIAQLLFLDAQDNTKDISLYINSPGGVITSGLAIMDTMNFIKSDVSTIAIGMAASMASILLTSGTKGKRFALPNSTVLIHQPLGGAQGQQTDIQIAANEILKSRKKINEILHETTGQPLEKIQKDTERDNYLTAEEAKEYGLIDEIMANKKK</sequence>
<dbReference type="EC" id="3.4.21.92" evidence="1"/>
<dbReference type="EMBL" id="CP000517">
    <property type="protein sequence ID" value="ABX26877.1"/>
    <property type="molecule type" value="Genomic_DNA"/>
</dbReference>
<dbReference type="RefSeq" id="WP_012211625.1">
    <property type="nucleotide sequence ID" value="NC_010080.1"/>
</dbReference>
<dbReference type="SMR" id="A8YUD9"/>
<dbReference type="MEROPS" id="S14.001"/>
<dbReference type="KEGG" id="lhe:lhv_0735"/>
<dbReference type="eggNOG" id="COG0740">
    <property type="taxonomic scope" value="Bacteria"/>
</dbReference>
<dbReference type="HOGENOM" id="CLU_058707_3_2_9"/>
<dbReference type="Proteomes" id="UP000000790">
    <property type="component" value="Chromosome"/>
</dbReference>
<dbReference type="GO" id="GO:0005737">
    <property type="term" value="C:cytoplasm"/>
    <property type="evidence" value="ECO:0007669"/>
    <property type="project" value="UniProtKB-SubCell"/>
</dbReference>
<dbReference type="GO" id="GO:0009368">
    <property type="term" value="C:endopeptidase Clp complex"/>
    <property type="evidence" value="ECO:0007669"/>
    <property type="project" value="TreeGrafter"/>
</dbReference>
<dbReference type="GO" id="GO:0004176">
    <property type="term" value="F:ATP-dependent peptidase activity"/>
    <property type="evidence" value="ECO:0007669"/>
    <property type="project" value="InterPro"/>
</dbReference>
<dbReference type="GO" id="GO:0051117">
    <property type="term" value="F:ATPase binding"/>
    <property type="evidence" value="ECO:0007669"/>
    <property type="project" value="TreeGrafter"/>
</dbReference>
<dbReference type="GO" id="GO:0004252">
    <property type="term" value="F:serine-type endopeptidase activity"/>
    <property type="evidence" value="ECO:0007669"/>
    <property type="project" value="UniProtKB-UniRule"/>
</dbReference>
<dbReference type="GO" id="GO:0006515">
    <property type="term" value="P:protein quality control for misfolded or incompletely synthesized proteins"/>
    <property type="evidence" value="ECO:0007669"/>
    <property type="project" value="TreeGrafter"/>
</dbReference>
<dbReference type="CDD" id="cd07017">
    <property type="entry name" value="S14_ClpP_2"/>
    <property type="match status" value="1"/>
</dbReference>
<dbReference type="FunFam" id="3.90.226.10:FF:000001">
    <property type="entry name" value="ATP-dependent Clp protease proteolytic subunit"/>
    <property type="match status" value="1"/>
</dbReference>
<dbReference type="Gene3D" id="3.90.226.10">
    <property type="entry name" value="2-enoyl-CoA Hydratase, Chain A, domain 1"/>
    <property type="match status" value="1"/>
</dbReference>
<dbReference type="HAMAP" id="MF_00444">
    <property type="entry name" value="ClpP"/>
    <property type="match status" value="1"/>
</dbReference>
<dbReference type="InterPro" id="IPR001907">
    <property type="entry name" value="ClpP"/>
</dbReference>
<dbReference type="InterPro" id="IPR029045">
    <property type="entry name" value="ClpP/crotonase-like_dom_sf"/>
</dbReference>
<dbReference type="InterPro" id="IPR023562">
    <property type="entry name" value="ClpP/TepA"/>
</dbReference>
<dbReference type="InterPro" id="IPR033135">
    <property type="entry name" value="ClpP_His_AS"/>
</dbReference>
<dbReference type="InterPro" id="IPR018215">
    <property type="entry name" value="ClpP_Ser_AS"/>
</dbReference>
<dbReference type="NCBIfam" id="TIGR00493">
    <property type="entry name" value="clpP"/>
    <property type="match status" value="1"/>
</dbReference>
<dbReference type="NCBIfam" id="NF001368">
    <property type="entry name" value="PRK00277.1"/>
    <property type="match status" value="1"/>
</dbReference>
<dbReference type="NCBIfam" id="NF009205">
    <property type="entry name" value="PRK12553.1"/>
    <property type="match status" value="1"/>
</dbReference>
<dbReference type="PANTHER" id="PTHR10381">
    <property type="entry name" value="ATP-DEPENDENT CLP PROTEASE PROTEOLYTIC SUBUNIT"/>
    <property type="match status" value="1"/>
</dbReference>
<dbReference type="PANTHER" id="PTHR10381:SF70">
    <property type="entry name" value="ATP-DEPENDENT CLP PROTEASE PROTEOLYTIC SUBUNIT"/>
    <property type="match status" value="1"/>
</dbReference>
<dbReference type="Pfam" id="PF00574">
    <property type="entry name" value="CLP_protease"/>
    <property type="match status" value="1"/>
</dbReference>
<dbReference type="PRINTS" id="PR00127">
    <property type="entry name" value="CLPPROTEASEP"/>
</dbReference>
<dbReference type="SUPFAM" id="SSF52096">
    <property type="entry name" value="ClpP/crotonase"/>
    <property type="match status" value="1"/>
</dbReference>
<dbReference type="PROSITE" id="PS00382">
    <property type="entry name" value="CLP_PROTEASE_HIS"/>
    <property type="match status" value="1"/>
</dbReference>
<dbReference type="PROSITE" id="PS00381">
    <property type="entry name" value="CLP_PROTEASE_SER"/>
    <property type="match status" value="1"/>
</dbReference>
<evidence type="ECO:0000255" key="1">
    <source>
        <dbReference type="HAMAP-Rule" id="MF_00444"/>
    </source>
</evidence>
<proteinExistence type="inferred from homology"/>
<feature type="chain" id="PRO_1000072342" description="ATP-dependent Clp protease proteolytic subunit">
    <location>
        <begin position="1"/>
        <end position="194"/>
    </location>
</feature>
<feature type="active site" description="Nucleophile" evidence="1">
    <location>
        <position position="97"/>
    </location>
</feature>
<feature type="active site" evidence="1">
    <location>
        <position position="122"/>
    </location>
</feature>
<protein>
    <recommendedName>
        <fullName evidence="1">ATP-dependent Clp protease proteolytic subunit</fullName>
        <ecNumber evidence="1">3.4.21.92</ecNumber>
    </recommendedName>
    <alternativeName>
        <fullName evidence="1">Endopeptidase Clp</fullName>
    </alternativeName>
</protein>